<sequence length="140" mass="15117">MAAMTYHLDVVSAEKKMFSGVVQKIQVTGSEGELGIFPGHAPLLTAIKPGMIRIVKQFGEEEFIYLSGGILEVQPSVVIVLADTAIRGLDLDEARALESKRKAEAHINNSHGDVDYAQASAELAKAIAKLRVIELTKKAM</sequence>
<dbReference type="EMBL" id="AL590842">
    <property type="protein sequence ID" value="CAL22688.1"/>
    <property type="molecule type" value="Genomic_DNA"/>
</dbReference>
<dbReference type="EMBL" id="AE009952">
    <property type="protein sequence ID" value="AAM87676.1"/>
    <property type="molecule type" value="Genomic_DNA"/>
</dbReference>
<dbReference type="EMBL" id="AE017042">
    <property type="protein sequence ID" value="AAS64166.1"/>
    <property type="molecule type" value="Genomic_DNA"/>
</dbReference>
<dbReference type="PIR" id="AD0500">
    <property type="entry name" value="AD0500"/>
</dbReference>
<dbReference type="RefSeq" id="WP_002215546.1">
    <property type="nucleotide sequence ID" value="NZ_WUCM01000028.1"/>
</dbReference>
<dbReference type="RefSeq" id="YP_002348971.1">
    <property type="nucleotide sequence ID" value="NC_003143.1"/>
</dbReference>
<dbReference type="SMR" id="P58647"/>
<dbReference type="STRING" id="214092.YPO4120"/>
<dbReference type="PaxDb" id="214092-YPO4120"/>
<dbReference type="DNASU" id="1149081"/>
<dbReference type="EnsemblBacteria" id="AAS64166">
    <property type="protein sequence ID" value="AAS64166"/>
    <property type="gene ID" value="YP_4027"/>
</dbReference>
<dbReference type="KEGG" id="ype:YPO4120"/>
<dbReference type="KEGG" id="ypk:y4134"/>
<dbReference type="KEGG" id="ypm:YP_4027"/>
<dbReference type="PATRIC" id="fig|214092.21.peg.4664"/>
<dbReference type="eggNOG" id="COG0355">
    <property type="taxonomic scope" value="Bacteria"/>
</dbReference>
<dbReference type="HOGENOM" id="CLU_084338_2_0_6"/>
<dbReference type="OMA" id="EERLYQG"/>
<dbReference type="OrthoDB" id="9791445at2"/>
<dbReference type="Proteomes" id="UP000000815">
    <property type="component" value="Chromosome"/>
</dbReference>
<dbReference type="Proteomes" id="UP000001019">
    <property type="component" value="Chromosome"/>
</dbReference>
<dbReference type="Proteomes" id="UP000002490">
    <property type="component" value="Chromosome"/>
</dbReference>
<dbReference type="GO" id="GO:0005886">
    <property type="term" value="C:plasma membrane"/>
    <property type="evidence" value="ECO:0007669"/>
    <property type="project" value="UniProtKB-SubCell"/>
</dbReference>
<dbReference type="GO" id="GO:0045259">
    <property type="term" value="C:proton-transporting ATP synthase complex"/>
    <property type="evidence" value="ECO:0007669"/>
    <property type="project" value="UniProtKB-KW"/>
</dbReference>
<dbReference type="GO" id="GO:0005524">
    <property type="term" value="F:ATP binding"/>
    <property type="evidence" value="ECO:0007669"/>
    <property type="project" value="UniProtKB-UniRule"/>
</dbReference>
<dbReference type="GO" id="GO:0046933">
    <property type="term" value="F:proton-transporting ATP synthase activity, rotational mechanism"/>
    <property type="evidence" value="ECO:0007669"/>
    <property type="project" value="UniProtKB-UniRule"/>
</dbReference>
<dbReference type="GO" id="GO:0015986">
    <property type="term" value="P:proton motive force-driven ATP synthesis"/>
    <property type="evidence" value="ECO:0000318"/>
    <property type="project" value="GO_Central"/>
</dbReference>
<dbReference type="CDD" id="cd12152">
    <property type="entry name" value="F1-ATPase_delta"/>
    <property type="match status" value="1"/>
</dbReference>
<dbReference type="FunFam" id="1.20.5.440:FF:000001">
    <property type="entry name" value="ATP synthase epsilon chain"/>
    <property type="match status" value="1"/>
</dbReference>
<dbReference type="FunFam" id="2.60.15.10:FF:000001">
    <property type="entry name" value="ATP synthase epsilon chain"/>
    <property type="match status" value="1"/>
</dbReference>
<dbReference type="Gene3D" id="1.20.5.440">
    <property type="entry name" value="ATP synthase delta/epsilon subunit, C-terminal domain"/>
    <property type="match status" value="1"/>
</dbReference>
<dbReference type="Gene3D" id="2.60.15.10">
    <property type="entry name" value="F0F1 ATP synthase delta/epsilon subunit, N-terminal"/>
    <property type="match status" value="1"/>
</dbReference>
<dbReference type="HAMAP" id="MF_00530">
    <property type="entry name" value="ATP_synth_epsil_bac"/>
    <property type="match status" value="1"/>
</dbReference>
<dbReference type="InterPro" id="IPR036794">
    <property type="entry name" value="ATP_F1_dsu/esu_C_sf"/>
</dbReference>
<dbReference type="InterPro" id="IPR001469">
    <property type="entry name" value="ATP_synth_F1_dsu/esu"/>
</dbReference>
<dbReference type="InterPro" id="IPR020546">
    <property type="entry name" value="ATP_synth_F1_dsu/esu_N"/>
</dbReference>
<dbReference type="InterPro" id="IPR020547">
    <property type="entry name" value="ATP_synth_F1_esu_C"/>
</dbReference>
<dbReference type="InterPro" id="IPR036771">
    <property type="entry name" value="ATPsynth_dsu/esu_N"/>
</dbReference>
<dbReference type="NCBIfam" id="TIGR01216">
    <property type="entry name" value="ATP_synt_epsi"/>
    <property type="match status" value="1"/>
</dbReference>
<dbReference type="NCBIfam" id="NF001847">
    <property type="entry name" value="PRK00571.1-4"/>
    <property type="match status" value="1"/>
</dbReference>
<dbReference type="PANTHER" id="PTHR13822">
    <property type="entry name" value="ATP SYNTHASE DELTA/EPSILON CHAIN"/>
    <property type="match status" value="1"/>
</dbReference>
<dbReference type="PANTHER" id="PTHR13822:SF10">
    <property type="entry name" value="ATP SYNTHASE EPSILON CHAIN, CHLOROPLASTIC"/>
    <property type="match status" value="1"/>
</dbReference>
<dbReference type="Pfam" id="PF00401">
    <property type="entry name" value="ATP-synt_DE"/>
    <property type="match status" value="1"/>
</dbReference>
<dbReference type="Pfam" id="PF02823">
    <property type="entry name" value="ATP-synt_DE_N"/>
    <property type="match status" value="1"/>
</dbReference>
<dbReference type="SUPFAM" id="SSF46604">
    <property type="entry name" value="Epsilon subunit of F1F0-ATP synthase C-terminal domain"/>
    <property type="match status" value="1"/>
</dbReference>
<dbReference type="SUPFAM" id="SSF51344">
    <property type="entry name" value="Epsilon subunit of F1F0-ATP synthase N-terminal domain"/>
    <property type="match status" value="1"/>
</dbReference>
<evidence type="ECO:0000250" key="1"/>
<evidence type="ECO:0000305" key="2"/>
<reference key="1">
    <citation type="journal article" date="2001" name="Nature">
        <title>Genome sequence of Yersinia pestis, the causative agent of plague.</title>
        <authorList>
            <person name="Parkhill J."/>
            <person name="Wren B.W."/>
            <person name="Thomson N.R."/>
            <person name="Titball R.W."/>
            <person name="Holden M.T.G."/>
            <person name="Prentice M.B."/>
            <person name="Sebaihia M."/>
            <person name="James K.D."/>
            <person name="Churcher C.M."/>
            <person name="Mungall K.L."/>
            <person name="Baker S."/>
            <person name="Basham D."/>
            <person name="Bentley S.D."/>
            <person name="Brooks K."/>
            <person name="Cerdeno-Tarraga A.-M."/>
            <person name="Chillingworth T."/>
            <person name="Cronin A."/>
            <person name="Davies R.M."/>
            <person name="Davis P."/>
            <person name="Dougan G."/>
            <person name="Feltwell T."/>
            <person name="Hamlin N."/>
            <person name="Holroyd S."/>
            <person name="Jagels K."/>
            <person name="Karlyshev A.V."/>
            <person name="Leather S."/>
            <person name="Moule S."/>
            <person name="Oyston P.C.F."/>
            <person name="Quail M.A."/>
            <person name="Rutherford K.M."/>
            <person name="Simmonds M."/>
            <person name="Skelton J."/>
            <person name="Stevens K."/>
            <person name="Whitehead S."/>
            <person name="Barrell B.G."/>
        </authorList>
    </citation>
    <scope>NUCLEOTIDE SEQUENCE [LARGE SCALE GENOMIC DNA]</scope>
    <source>
        <strain>CO-92 / Biovar Orientalis</strain>
    </source>
</reference>
<reference key="2">
    <citation type="journal article" date="2002" name="J. Bacteriol.">
        <title>Genome sequence of Yersinia pestis KIM.</title>
        <authorList>
            <person name="Deng W."/>
            <person name="Burland V."/>
            <person name="Plunkett G. III"/>
            <person name="Boutin A."/>
            <person name="Mayhew G.F."/>
            <person name="Liss P."/>
            <person name="Perna N.T."/>
            <person name="Rose D.J."/>
            <person name="Mau B."/>
            <person name="Zhou S."/>
            <person name="Schwartz D.C."/>
            <person name="Fetherston J.D."/>
            <person name="Lindler L.E."/>
            <person name="Brubaker R.R."/>
            <person name="Plano G.V."/>
            <person name="Straley S.C."/>
            <person name="McDonough K.A."/>
            <person name="Nilles M.L."/>
            <person name="Matson J.S."/>
            <person name="Blattner F.R."/>
            <person name="Perry R.D."/>
        </authorList>
    </citation>
    <scope>NUCLEOTIDE SEQUENCE [LARGE SCALE GENOMIC DNA]</scope>
    <source>
        <strain>KIM10+ / Biovar Mediaevalis</strain>
    </source>
</reference>
<reference key="3">
    <citation type="journal article" date="2004" name="DNA Res.">
        <title>Complete genome sequence of Yersinia pestis strain 91001, an isolate avirulent to humans.</title>
        <authorList>
            <person name="Song Y."/>
            <person name="Tong Z."/>
            <person name="Wang J."/>
            <person name="Wang L."/>
            <person name="Guo Z."/>
            <person name="Han Y."/>
            <person name="Zhang J."/>
            <person name="Pei D."/>
            <person name="Zhou D."/>
            <person name="Qin H."/>
            <person name="Pang X."/>
            <person name="Han Y."/>
            <person name="Zhai J."/>
            <person name="Li M."/>
            <person name="Cui B."/>
            <person name="Qi Z."/>
            <person name="Jin L."/>
            <person name="Dai R."/>
            <person name="Chen F."/>
            <person name="Li S."/>
            <person name="Ye C."/>
            <person name="Du Z."/>
            <person name="Lin W."/>
            <person name="Wang J."/>
            <person name="Yu J."/>
            <person name="Yang H."/>
            <person name="Wang J."/>
            <person name="Huang P."/>
            <person name="Yang R."/>
        </authorList>
    </citation>
    <scope>NUCLEOTIDE SEQUENCE [LARGE SCALE GENOMIC DNA]</scope>
    <source>
        <strain>91001 / Biovar Mediaevalis</strain>
    </source>
</reference>
<feature type="chain" id="PRO_0000188246" description="ATP synthase epsilon chain">
    <location>
        <begin position="1"/>
        <end position="140"/>
    </location>
</feature>
<name>ATPE_YERPE</name>
<organism>
    <name type="scientific">Yersinia pestis</name>
    <dbReference type="NCBI Taxonomy" id="632"/>
    <lineage>
        <taxon>Bacteria</taxon>
        <taxon>Pseudomonadati</taxon>
        <taxon>Pseudomonadota</taxon>
        <taxon>Gammaproteobacteria</taxon>
        <taxon>Enterobacterales</taxon>
        <taxon>Yersiniaceae</taxon>
        <taxon>Yersinia</taxon>
    </lineage>
</organism>
<accession>P58647</accession>
<accession>Q0W9R7</accession>
<protein>
    <recommendedName>
        <fullName>ATP synthase epsilon chain</fullName>
    </recommendedName>
    <alternativeName>
        <fullName>ATP synthase F1 sector epsilon subunit</fullName>
    </alternativeName>
    <alternativeName>
        <fullName>F-ATPase epsilon subunit</fullName>
    </alternativeName>
</protein>
<proteinExistence type="inferred from homology"/>
<comment type="function">
    <text evidence="1">Produces ATP from ADP in the presence of a proton gradient across the membrane.</text>
</comment>
<comment type="subunit">
    <text>F-type ATPases have 2 components, CF(1) - the catalytic core - and CF(0) - the membrane proton channel. CF(1) has five subunits: alpha(3), beta(3), gamma(1), delta(1), epsilon(1). CF(0) has three main subunits: a, b and c.</text>
</comment>
<comment type="subcellular location">
    <subcellularLocation>
        <location evidence="1">Cell inner membrane</location>
        <topology evidence="1">Peripheral membrane protein</topology>
    </subcellularLocation>
</comment>
<comment type="similarity">
    <text evidence="2">Belongs to the ATPase epsilon chain family.</text>
</comment>
<gene>
    <name type="primary">atpC</name>
    <name type="ordered locus">YPO4120</name>
    <name type="ordered locus">y4134</name>
    <name type="ordered locus">YP_4027</name>
</gene>
<keyword id="KW-0066">ATP synthesis</keyword>
<keyword id="KW-0997">Cell inner membrane</keyword>
<keyword id="KW-1003">Cell membrane</keyword>
<keyword id="KW-0139">CF(1)</keyword>
<keyword id="KW-0375">Hydrogen ion transport</keyword>
<keyword id="KW-0406">Ion transport</keyword>
<keyword id="KW-0472">Membrane</keyword>
<keyword id="KW-1185">Reference proteome</keyword>
<keyword id="KW-0813">Transport</keyword>